<keyword id="KW-0963">Cytoplasm</keyword>
<keyword id="KW-0255">Endonuclease</keyword>
<keyword id="KW-0378">Hydrolase</keyword>
<keyword id="KW-0460">Magnesium</keyword>
<keyword id="KW-0479">Metal-binding</keyword>
<keyword id="KW-0540">Nuclease</keyword>
<keyword id="KW-1185">Reference proteome</keyword>
<gene>
    <name evidence="1" type="primary">rnhC</name>
    <name type="ordered locus">GK2697</name>
</gene>
<proteinExistence type="inferred from homology"/>
<name>RNH3_GEOKA</name>
<comment type="function">
    <text evidence="1">Endonuclease that specifically degrades the RNA of RNA-DNA hybrids.</text>
</comment>
<comment type="catalytic activity">
    <reaction evidence="1">
        <text>Endonucleolytic cleavage to 5'-phosphomonoester.</text>
        <dbReference type="EC" id="3.1.26.4"/>
    </reaction>
</comment>
<comment type="cofactor">
    <cofactor evidence="1">
        <name>Mn(2+)</name>
        <dbReference type="ChEBI" id="CHEBI:29035"/>
    </cofactor>
    <cofactor evidence="1">
        <name>Mg(2+)</name>
        <dbReference type="ChEBI" id="CHEBI:18420"/>
    </cofactor>
    <text evidence="1">Manganese or magnesium. Binds 1 divalent metal ion per monomer in the absence of substrate. May bind a second metal ion after substrate binding.</text>
</comment>
<comment type="subcellular location">
    <subcellularLocation>
        <location evidence="1">Cytoplasm</location>
    </subcellularLocation>
</comment>
<comment type="similarity">
    <text evidence="1">Belongs to the RNase HII family. RnhC subfamily.</text>
</comment>
<protein>
    <recommendedName>
        <fullName evidence="1">Ribonuclease HIII</fullName>
        <shortName evidence="1">RNase HIII</shortName>
        <ecNumber evidence="1">3.1.26.4</ecNumber>
    </recommendedName>
</protein>
<reference key="1">
    <citation type="journal article" date="2004" name="Nucleic Acids Res.">
        <title>Thermoadaptation trait revealed by the genome sequence of thermophilic Geobacillus kaustophilus.</title>
        <authorList>
            <person name="Takami H."/>
            <person name="Takaki Y."/>
            <person name="Chee G.-J."/>
            <person name="Nishi S."/>
            <person name="Shimamura S."/>
            <person name="Suzuki H."/>
            <person name="Matsui S."/>
            <person name="Uchiyama I."/>
        </authorList>
    </citation>
    <scope>NUCLEOTIDE SEQUENCE [LARGE SCALE GENOMIC DNA]</scope>
    <source>
        <strain>HTA426</strain>
    </source>
</reference>
<feature type="chain" id="PRO_1000031230" description="Ribonuclease HIII">
    <location>
        <begin position="1"/>
        <end position="311"/>
    </location>
</feature>
<feature type="domain" description="RNase H type-2" evidence="2">
    <location>
        <begin position="93"/>
        <end position="310"/>
    </location>
</feature>
<feature type="binding site" evidence="1">
    <location>
        <position position="99"/>
    </location>
    <ligand>
        <name>a divalent metal cation</name>
        <dbReference type="ChEBI" id="CHEBI:60240"/>
    </ligand>
</feature>
<feature type="binding site" evidence="1">
    <location>
        <position position="100"/>
    </location>
    <ligand>
        <name>a divalent metal cation</name>
        <dbReference type="ChEBI" id="CHEBI:60240"/>
    </ligand>
</feature>
<feature type="binding site" evidence="1">
    <location>
        <position position="204"/>
    </location>
    <ligand>
        <name>a divalent metal cation</name>
        <dbReference type="ChEBI" id="CHEBI:60240"/>
    </ligand>
</feature>
<evidence type="ECO:0000255" key="1">
    <source>
        <dbReference type="HAMAP-Rule" id="MF_00053"/>
    </source>
</evidence>
<evidence type="ECO:0000255" key="2">
    <source>
        <dbReference type="PROSITE-ProRule" id="PRU01319"/>
    </source>
</evidence>
<organism>
    <name type="scientific">Geobacillus kaustophilus (strain HTA426)</name>
    <dbReference type="NCBI Taxonomy" id="235909"/>
    <lineage>
        <taxon>Bacteria</taxon>
        <taxon>Bacillati</taxon>
        <taxon>Bacillota</taxon>
        <taxon>Bacilli</taxon>
        <taxon>Bacillales</taxon>
        <taxon>Anoxybacillaceae</taxon>
        <taxon>Geobacillus</taxon>
        <taxon>Geobacillus thermoleovorans group</taxon>
    </lineage>
</organism>
<accession>Q5KWF4</accession>
<dbReference type="EC" id="3.1.26.4" evidence="1"/>
<dbReference type="EMBL" id="BA000043">
    <property type="protein sequence ID" value="BAD76982.1"/>
    <property type="molecule type" value="Genomic_DNA"/>
</dbReference>
<dbReference type="RefSeq" id="WP_011232171.1">
    <property type="nucleotide sequence ID" value="NC_006510.1"/>
</dbReference>
<dbReference type="SMR" id="Q5KWF4"/>
<dbReference type="STRING" id="235909.GK2697"/>
<dbReference type="GeneID" id="32064597"/>
<dbReference type="KEGG" id="gka:GK2697"/>
<dbReference type="PATRIC" id="fig|235909.7.peg.2881"/>
<dbReference type="eggNOG" id="COG1039">
    <property type="taxonomic scope" value="Bacteria"/>
</dbReference>
<dbReference type="HOGENOM" id="CLU_059546_1_0_9"/>
<dbReference type="Proteomes" id="UP000001172">
    <property type="component" value="Chromosome"/>
</dbReference>
<dbReference type="GO" id="GO:0005737">
    <property type="term" value="C:cytoplasm"/>
    <property type="evidence" value="ECO:0007669"/>
    <property type="project" value="UniProtKB-SubCell"/>
</dbReference>
<dbReference type="GO" id="GO:0032299">
    <property type="term" value="C:ribonuclease H2 complex"/>
    <property type="evidence" value="ECO:0007669"/>
    <property type="project" value="TreeGrafter"/>
</dbReference>
<dbReference type="GO" id="GO:0000287">
    <property type="term" value="F:magnesium ion binding"/>
    <property type="evidence" value="ECO:0007669"/>
    <property type="project" value="UniProtKB-UniRule"/>
</dbReference>
<dbReference type="GO" id="GO:0003723">
    <property type="term" value="F:RNA binding"/>
    <property type="evidence" value="ECO:0007669"/>
    <property type="project" value="InterPro"/>
</dbReference>
<dbReference type="GO" id="GO:0004523">
    <property type="term" value="F:RNA-DNA hybrid ribonuclease activity"/>
    <property type="evidence" value="ECO:0007669"/>
    <property type="project" value="UniProtKB-UniRule"/>
</dbReference>
<dbReference type="GO" id="GO:0043137">
    <property type="term" value="P:DNA replication, removal of RNA primer"/>
    <property type="evidence" value="ECO:0007669"/>
    <property type="project" value="TreeGrafter"/>
</dbReference>
<dbReference type="GO" id="GO:0006298">
    <property type="term" value="P:mismatch repair"/>
    <property type="evidence" value="ECO:0007669"/>
    <property type="project" value="TreeGrafter"/>
</dbReference>
<dbReference type="CDD" id="cd06590">
    <property type="entry name" value="RNase_HII_bacteria_HIII_like"/>
    <property type="match status" value="1"/>
</dbReference>
<dbReference type="CDD" id="cd14796">
    <property type="entry name" value="RNAse_HIII_N"/>
    <property type="match status" value="1"/>
</dbReference>
<dbReference type="FunFam" id="3.30.420.10:FF:000047">
    <property type="entry name" value="Ribonuclease HIII"/>
    <property type="match status" value="1"/>
</dbReference>
<dbReference type="Gene3D" id="3.30.420.10">
    <property type="entry name" value="Ribonuclease H-like superfamily/Ribonuclease H"/>
    <property type="match status" value="1"/>
</dbReference>
<dbReference type="Gene3D" id="3.30.310.10">
    <property type="entry name" value="TATA-Binding Protein"/>
    <property type="match status" value="1"/>
</dbReference>
<dbReference type="HAMAP" id="MF_00053">
    <property type="entry name" value="RNase_HIII"/>
    <property type="match status" value="1"/>
</dbReference>
<dbReference type="InterPro" id="IPR001352">
    <property type="entry name" value="RNase_HII/HIII"/>
</dbReference>
<dbReference type="InterPro" id="IPR024567">
    <property type="entry name" value="RNase_HII/HIII_dom"/>
</dbReference>
<dbReference type="InterPro" id="IPR004641">
    <property type="entry name" value="RNase_HIII"/>
</dbReference>
<dbReference type="InterPro" id="IPR024568">
    <property type="entry name" value="RNase_HIII_N"/>
</dbReference>
<dbReference type="InterPro" id="IPR012337">
    <property type="entry name" value="RNaseH-like_sf"/>
</dbReference>
<dbReference type="InterPro" id="IPR036397">
    <property type="entry name" value="RNaseH_sf"/>
</dbReference>
<dbReference type="InterPro" id="IPR012295">
    <property type="entry name" value="TBP_dom_sf"/>
</dbReference>
<dbReference type="NCBIfam" id="TIGR00716">
    <property type="entry name" value="rnhC"/>
    <property type="match status" value="1"/>
</dbReference>
<dbReference type="PANTHER" id="PTHR10954:SF23">
    <property type="entry name" value="RIBONUCLEASE"/>
    <property type="match status" value="1"/>
</dbReference>
<dbReference type="PANTHER" id="PTHR10954">
    <property type="entry name" value="RIBONUCLEASE H2 SUBUNIT A"/>
    <property type="match status" value="1"/>
</dbReference>
<dbReference type="Pfam" id="PF11858">
    <property type="entry name" value="DUF3378"/>
    <property type="match status" value="1"/>
</dbReference>
<dbReference type="Pfam" id="PF01351">
    <property type="entry name" value="RNase_HII"/>
    <property type="match status" value="1"/>
</dbReference>
<dbReference type="PIRSF" id="PIRSF037748">
    <property type="entry name" value="RnhC"/>
    <property type="match status" value="1"/>
</dbReference>
<dbReference type="SUPFAM" id="SSF53098">
    <property type="entry name" value="Ribonuclease H-like"/>
    <property type="match status" value="1"/>
</dbReference>
<dbReference type="PROSITE" id="PS51975">
    <property type="entry name" value="RNASE_H_2"/>
    <property type="match status" value="1"/>
</dbReference>
<sequence>MSNYVIQADQQLLDALRAHYQDALSDRLPAGALFAVKRPDVVITAYRSGKVLFQGKAAEQEAGKWMVKRGADPGKRQERETASPPLEHRLEKLSAIGSDEVGTGDYFGPIVVAAAYVDRSHIAKIAALGVKDSKQLTDEAIHKIAPAIMETAPYAVTVLDNAEYNRWQRSGMPQTKMKALLHNRTLAKLVDAIAPIEPEAIIIDQFLERGSYFRCLADETRIVSDRVHCLPKAESVHVAVAAASIIARYVFLEEMERLSRTVGLLLPKGAGAIVDEAAARIIRERGAEALETCAKLHFANTKKALDIAKHR</sequence>